<proteinExistence type="evidence at transcript level"/>
<reference evidence="6" key="1">
    <citation type="submission" date="2004-07" db="EMBL/GenBank/DDBJ databases">
        <authorList>
            <consortium name="NIH - Xenopus Gene Collection (XGC) project"/>
        </authorList>
    </citation>
    <scope>NUCLEOTIDE SEQUENCE [LARGE SCALE MRNA]</scope>
    <source>
        <tissue evidence="6">Embryo</tissue>
    </source>
</reference>
<feature type="chain" id="PRO_0000233956" description="Embryonic polyadenylate-binding protein">
    <location>
        <begin position="1"/>
        <end position="629"/>
    </location>
</feature>
<feature type="domain" description="RRM 1" evidence="3">
    <location>
        <begin position="11"/>
        <end position="89"/>
    </location>
</feature>
<feature type="domain" description="RRM 2" evidence="3">
    <location>
        <begin position="99"/>
        <end position="175"/>
    </location>
</feature>
<feature type="domain" description="RRM 3" evidence="3">
    <location>
        <begin position="191"/>
        <end position="268"/>
    </location>
</feature>
<feature type="domain" description="RRM 4" evidence="3">
    <location>
        <begin position="294"/>
        <end position="370"/>
    </location>
</feature>
<feature type="domain" description="PABC" evidence="4">
    <location>
        <begin position="539"/>
        <end position="616"/>
    </location>
</feature>
<organism>
    <name type="scientific">Xenopus tropicalis</name>
    <name type="common">Western clawed frog</name>
    <name type="synonym">Silurana tropicalis</name>
    <dbReference type="NCBI Taxonomy" id="8364"/>
    <lineage>
        <taxon>Eukaryota</taxon>
        <taxon>Metazoa</taxon>
        <taxon>Chordata</taxon>
        <taxon>Craniata</taxon>
        <taxon>Vertebrata</taxon>
        <taxon>Euteleostomi</taxon>
        <taxon>Amphibia</taxon>
        <taxon>Batrachia</taxon>
        <taxon>Anura</taxon>
        <taxon>Pipoidea</taxon>
        <taxon>Pipidae</taxon>
        <taxon>Xenopodinae</taxon>
        <taxon>Xenopus</taxon>
        <taxon>Silurana</taxon>
    </lineage>
</organism>
<accession>Q6DEY7</accession>
<gene>
    <name evidence="2" type="primary">epabp</name>
</gene>
<sequence>MNATGAGYPLASLYVGDLHPDVTEAMLYEKFSPAGPIMSIRVCRDIATRRSLGYAYINFQQPADAERALDTMNFEVIKGRPIRIMWSQRDPGLRKSGVGNVFIKNLDESIDNKALYDTFSAFGNILSCKVVCDEHGSRGYGFVHFETQEAANRAIQTMNGMLLNDRKVFVGHFKSRRERELEYGAKVMEFTNVYIKNFGEDMDDKRLREIFSAFGNTLSVKVMMDDTGRSRGFGFVNYGNHEEAQKAVSEMNGKEVNGRMIYVGRAQKRIERQGELKRKFEQIKQERINRYQGVNLYVKNLDDGIDDDRLRKEFSPYGTITSAKVMTEGGHSKGFGFVCFSSPEEATKAVTEMNGRIVSTKPLYVALAQRKEERKAILTNQYMQRLATMRAMPGPLLGSFQQPANYFLPAMPQPPNRTFYSPNPVAPVRQAPQWTSHQSRPPQYQPPAPLMRAVPPRRMSSNISTMKQASTQVPRVAPHSQRVANIGTQTAGARAQVNPSIMRTMPHYKYSCAVRNVQPIGTNTHLQQVMEPAVLMQGQEPLTASSLASAPPQEQKQMLGERLYPLIHEMHPTLAGKITGMLLEIDNSELLHMLESPESLHSKVEEAVAVLQAHQAKENSQKSAQQSLI</sequence>
<comment type="function">
    <text evidence="2">Binds and protects the poly(A) tail of mRNA with or without an AU-rich element (ARE) and prevents mRNA deadenylation. Stimulates the translation of mRNAs to which it is bound during early development (By similarity).</text>
</comment>
<comment type="subunit">
    <text evidence="2">Interacts with dazl in an RNA-independent manner. The C-terminus can self-associate and also interact with the C-terminus of pabpc1, independently of RNA. RRM 1 and RRM 2 interact with both eif4g1 and paip1, and the C-terminus also interacts with paip1. Prior to oocyte maturation, found in a complex with dazl and pum2 proteins and spdy1 mRNA; pum2 dissociates from the complex during maturation. Interacts with the translation termination factor sup35/erf3 (By similarity).</text>
</comment>
<comment type="subcellular location">
    <subcellularLocation>
        <location evidence="1">Cytoplasm</location>
    </subcellularLocation>
    <text evidence="1">Associated with polysomes.</text>
</comment>
<comment type="similarity">
    <text evidence="5">Belongs to the polyadenylate-binding protein type-1 family.</text>
</comment>
<evidence type="ECO:0000250" key="1"/>
<evidence type="ECO:0000250" key="2">
    <source>
        <dbReference type="UniProtKB" id="Q98SP8"/>
    </source>
</evidence>
<evidence type="ECO:0000255" key="3">
    <source>
        <dbReference type="PROSITE-ProRule" id="PRU00176"/>
    </source>
</evidence>
<evidence type="ECO:0000255" key="4">
    <source>
        <dbReference type="PROSITE-ProRule" id="PRU00641"/>
    </source>
</evidence>
<evidence type="ECO:0000305" key="5"/>
<evidence type="ECO:0000312" key="6">
    <source>
        <dbReference type="EMBL" id="AAH76956.1"/>
    </source>
</evidence>
<dbReference type="EMBL" id="BC076956">
    <property type="protein sequence ID" value="AAH76956.1"/>
    <property type="molecule type" value="mRNA"/>
</dbReference>
<dbReference type="RefSeq" id="NP_001005062.1">
    <property type="nucleotide sequence ID" value="NM_001005062.1"/>
</dbReference>
<dbReference type="SMR" id="Q6DEY7"/>
<dbReference type="FunCoup" id="Q6DEY7">
    <property type="interactions" value="1060"/>
</dbReference>
<dbReference type="STRING" id="8364.ENSXETP00000034446"/>
<dbReference type="PaxDb" id="8364-ENSXETP00000058706"/>
<dbReference type="DNASU" id="448615"/>
<dbReference type="GeneID" id="448615"/>
<dbReference type="KEGG" id="xtr:448615"/>
<dbReference type="AGR" id="Xenbase:XB-GENE-5742459"/>
<dbReference type="CTD" id="80336"/>
<dbReference type="Xenbase" id="XB-GENE-5742459">
    <property type="gene designation" value="pabpc1l"/>
</dbReference>
<dbReference type="eggNOG" id="KOG0123">
    <property type="taxonomic scope" value="Eukaryota"/>
</dbReference>
<dbReference type="InParanoid" id="Q6DEY7"/>
<dbReference type="OMA" id="DHMNGKE"/>
<dbReference type="OrthoDB" id="19742at2759"/>
<dbReference type="Proteomes" id="UP000008143">
    <property type="component" value="Chromosome 10"/>
</dbReference>
<dbReference type="Bgee" id="ENSXETG00000022831">
    <property type="expression patterns" value="Expressed in ovary and 8 other cell types or tissues"/>
</dbReference>
<dbReference type="GO" id="GO:0005737">
    <property type="term" value="C:cytoplasm"/>
    <property type="evidence" value="ECO:0000250"/>
    <property type="project" value="UniProtKB"/>
</dbReference>
<dbReference type="GO" id="GO:0031370">
    <property type="term" value="F:eukaryotic initiation factor 4G binding"/>
    <property type="evidence" value="ECO:0000250"/>
    <property type="project" value="UniProtKB"/>
</dbReference>
<dbReference type="GO" id="GO:0008143">
    <property type="term" value="F:poly(A) binding"/>
    <property type="evidence" value="ECO:0000250"/>
    <property type="project" value="UniProtKB"/>
</dbReference>
<dbReference type="GO" id="GO:0043009">
    <property type="term" value="P:chordate embryonic development"/>
    <property type="evidence" value="ECO:0000250"/>
    <property type="project" value="UniProtKB"/>
</dbReference>
<dbReference type="GO" id="GO:0006397">
    <property type="term" value="P:mRNA processing"/>
    <property type="evidence" value="ECO:0007669"/>
    <property type="project" value="UniProtKB-KW"/>
</dbReference>
<dbReference type="GO" id="GO:0048255">
    <property type="term" value="P:mRNA stabilization"/>
    <property type="evidence" value="ECO:0000250"/>
    <property type="project" value="UniProtKB"/>
</dbReference>
<dbReference type="GO" id="GO:0060212">
    <property type="term" value="P:negative regulation of nuclear-transcribed mRNA poly(A) tail shortening"/>
    <property type="evidence" value="ECO:0000250"/>
    <property type="project" value="UniProtKB"/>
</dbReference>
<dbReference type="GO" id="GO:0006412">
    <property type="term" value="P:translation"/>
    <property type="evidence" value="ECO:0007669"/>
    <property type="project" value="UniProtKB-KW"/>
</dbReference>
<dbReference type="CDD" id="cd12378">
    <property type="entry name" value="RRM1_I_PABPs"/>
    <property type="match status" value="1"/>
</dbReference>
<dbReference type="CDD" id="cd12379">
    <property type="entry name" value="RRM2_I_PABPs"/>
    <property type="match status" value="1"/>
</dbReference>
<dbReference type="CDD" id="cd12380">
    <property type="entry name" value="RRM3_I_PABPs"/>
    <property type="match status" value="1"/>
</dbReference>
<dbReference type="CDD" id="cd12381">
    <property type="entry name" value="RRM4_I_PABPs"/>
    <property type="match status" value="1"/>
</dbReference>
<dbReference type="FunFam" id="1.10.1900.10:FF:000001">
    <property type="entry name" value="Polyadenylate-binding protein"/>
    <property type="match status" value="1"/>
</dbReference>
<dbReference type="FunFam" id="3.30.70.330:FF:000003">
    <property type="entry name" value="Polyadenylate-binding protein"/>
    <property type="match status" value="1"/>
</dbReference>
<dbReference type="FunFam" id="3.30.70.330:FF:000021">
    <property type="entry name" value="Polyadenylate-binding protein"/>
    <property type="match status" value="1"/>
</dbReference>
<dbReference type="FunFam" id="3.30.70.330:FF:000042">
    <property type="entry name" value="Polyadenylate-binding protein"/>
    <property type="match status" value="1"/>
</dbReference>
<dbReference type="FunFam" id="3.30.70.330:FF:000049">
    <property type="entry name" value="Polyadenylate-binding protein"/>
    <property type="match status" value="1"/>
</dbReference>
<dbReference type="Gene3D" id="3.30.70.330">
    <property type="match status" value="4"/>
</dbReference>
<dbReference type="Gene3D" id="1.10.1900.10">
    <property type="entry name" value="c-terminal domain of poly(a) binding protein"/>
    <property type="match status" value="1"/>
</dbReference>
<dbReference type="InterPro" id="IPR012677">
    <property type="entry name" value="Nucleotide-bd_a/b_plait_sf"/>
</dbReference>
<dbReference type="InterPro" id="IPR036053">
    <property type="entry name" value="PABP-dom"/>
</dbReference>
<dbReference type="InterPro" id="IPR006515">
    <property type="entry name" value="PABP_1234"/>
</dbReference>
<dbReference type="InterPro" id="IPR002004">
    <property type="entry name" value="PABP_HYD_C"/>
</dbReference>
<dbReference type="InterPro" id="IPR034364">
    <property type="entry name" value="PABP_RRM1"/>
</dbReference>
<dbReference type="InterPro" id="IPR035979">
    <property type="entry name" value="RBD_domain_sf"/>
</dbReference>
<dbReference type="InterPro" id="IPR045305">
    <property type="entry name" value="RRM2_I_PABPs"/>
</dbReference>
<dbReference type="InterPro" id="IPR000504">
    <property type="entry name" value="RRM_dom"/>
</dbReference>
<dbReference type="InterPro" id="IPR003954">
    <property type="entry name" value="RRM_dom_euk"/>
</dbReference>
<dbReference type="NCBIfam" id="TIGR01628">
    <property type="entry name" value="PABP-1234"/>
    <property type="match status" value="1"/>
</dbReference>
<dbReference type="PANTHER" id="PTHR24012">
    <property type="entry name" value="RNA BINDING PROTEIN"/>
    <property type="match status" value="1"/>
</dbReference>
<dbReference type="Pfam" id="PF00658">
    <property type="entry name" value="MLLE"/>
    <property type="match status" value="1"/>
</dbReference>
<dbReference type="Pfam" id="PF00076">
    <property type="entry name" value="RRM_1"/>
    <property type="match status" value="4"/>
</dbReference>
<dbReference type="SMART" id="SM00517">
    <property type="entry name" value="PolyA"/>
    <property type="match status" value="1"/>
</dbReference>
<dbReference type="SMART" id="SM00360">
    <property type="entry name" value="RRM"/>
    <property type="match status" value="4"/>
</dbReference>
<dbReference type="SMART" id="SM00361">
    <property type="entry name" value="RRM_1"/>
    <property type="match status" value="3"/>
</dbReference>
<dbReference type="SUPFAM" id="SSF63570">
    <property type="entry name" value="PABC (PABP) domain"/>
    <property type="match status" value="1"/>
</dbReference>
<dbReference type="SUPFAM" id="SSF54928">
    <property type="entry name" value="RNA-binding domain, RBD"/>
    <property type="match status" value="2"/>
</dbReference>
<dbReference type="PROSITE" id="PS51309">
    <property type="entry name" value="PABC"/>
    <property type="match status" value="1"/>
</dbReference>
<dbReference type="PROSITE" id="PS50102">
    <property type="entry name" value="RRM"/>
    <property type="match status" value="4"/>
</dbReference>
<keyword id="KW-0963">Cytoplasm</keyword>
<keyword id="KW-0507">mRNA processing</keyword>
<keyword id="KW-0648">Protein biosynthesis</keyword>
<keyword id="KW-1185">Reference proteome</keyword>
<keyword id="KW-0677">Repeat</keyword>
<keyword id="KW-0694">RNA-binding</keyword>
<protein>
    <recommendedName>
        <fullName>Embryonic polyadenylate-binding protein</fullName>
        <shortName>Embryonic poly(A)-binding protein</shortName>
        <shortName>ePABP</shortName>
    </recommendedName>
</protein>
<name>EPAB_XENTR</name>